<keyword id="KW-0056">Arginine metabolism</keyword>
<keyword id="KW-0963">Cytoplasm</keyword>
<keyword id="KW-0378">Hydrolase</keyword>
<organism>
    <name type="scientific">Rhodococcus erythropolis (strain PR4 / NBRC 100887)</name>
    <dbReference type="NCBI Taxonomy" id="234621"/>
    <lineage>
        <taxon>Bacteria</taxon>
        <taxon>Bacillati</taxon>
        <taxon>Actinomycetota</taxon>
        <taxon>Actinomycetes</taxon>
        <taxon>Mycobacteriales</taxon>
        <taxon>Nocardiaceae</taxon>
        <taxon>Rhodococcus</taxon>
        <taxon>Rhodococcus erythropolis group</taxon>
    </lineage>
</organism>
<gene>
    <name evidence="1" type="primary">arcA</name>
    <name type="ordered locus">RER_43760</name>
</gene>
<protein>
    <recommendedName>
        <fullName evidence="1">Arginine deiminase</fullName>
        <shortName evidence="1">ADI</shortName>
        <ecNumber evidence="1">3.5.3.6</ecNumber>
    </recommendedName>
    <alternativeName>
        <fullName evidence="1">Arginine dihydrolase</fullName>
        <shortName evidence="1">AD</shortName>
    </alternativeName>
</protein>
<sequence length="405" mass="43520">MNASGSVPLGVDSEVGRLRSVILHRPGDELKRLTPRNNDELLFDALPWVDRAQEEHDQFATVLRERGVEVLLLSDLLTEALEVSGAARIQGIAAAVDARKIGHALGQHLAAYLRKVEPKELSSILTAGMTFDELPIDAGSTSLVRRMHHGGDFVIDPLPNLLFTRDSSFWVGPRVIITSLALSARARESSITDLVYAHHPRFKGVRRAYESHTAPVEGGDVLLLAPGVIAIGVGERTSPAGAEALARSVFDDGLAHTVLVVPIEQRRASMHLDTVCTMVEADAVVMYPAIQDTLAAFTLRKEDDGVSIRGATPFLEAAADAMGIGKLRVIDTGLDTVTAEREQWDDGNNTLAVEPGVVVAYERNVETNARLEASGIEVLRIAGSELGSGRGGPRCMSCPIARDPL</sequence>
<reference key="1">
    <citation type="submission" date="2005-03" db="EMBL/GenBank/DDBJ databases">
        <title>Comparison of the complete genome sequences of Rhodococcus erythropolis PR4 and Rhodococcus opacus B4.</title>
        <authorList>
            <person name="Takarada H."/>
            <person name="Sekine M."/>
            <person name="Hosoyama A."/>
            <person name="Yamada R."/>
            <person name="Fujisawa T."/>
            <person name="Omata S."/>
            <person name="Shimizu A."/>
            <person name="Tsukatani N."/>
            <person name="Tanikawa S."/>
            <person name="Fujita N."/>
            <person name="Harayama S."/>
        </authorList>
    </citation>
    <scope>NUCLEOTIDE SEQUENCE [LARGE SCALE GENOMIC DNA]</scope>
    <source>
        <strain>PR4 / NBRC 100887</strain>
    </source>
</reference>
<evidence type="ECO:0000255" key="1">
    <source>
        <dbReference type="HAMAP-Rule" id="MF_00242"/>
    </source>
</evidence>
<feature type="chain" id="PRO_1000204477" description="Arginine deiminase">
    <location>
        <begin position="1"/>
        <end position="405"/>
    </location>
</feature>
<feature type="active site" description="Amidino-cysteine intermediate" evidence="1">
    <location>
        <position position="395"/>
    </location>
</feature>
<dbReference type="EC" id="3.5.3.6" evidence="1"/>
<dbReference type="EMBL" id="AP008957">
    <property type="protein sequence ID" value="BAH35084.1"/>
    <property type="molecule type" value="Genomic_DNA"/>
</dbReference>
<dbReference type="RefSeq" id="WP_019744713.1">
    <property type="nucleotide sequence ID" value="NC_012490.1"/>
</dbReference>
<dbReference type="SMR" id="C1A399"/>
<dbReference type="GeneID" id="57485728"/>
<dbReference type="KEGG" id="rer:RER_43760"/>
<dbReference type="eggNOG" id="COG2235">
    <property type="taxonomic scope" value="Bacteria"/>
</dbReference>
<dbReference type="HOGENOM" id="CLU_052662_0_1_11"/>
<dbReference type="UniPathway" id="UPA00254">
    <property type="reaction ID" value="UER00364"/>
</dbReference>
<dbReference type="Proteomes" id="UP000002204">
    <property type="component" value="Chromosome"/>
</dbReference>
<dbReference type="GO" id="GO:0005737">
    <property type="term" value="C:cytoplasm"/>
    <property type="evidence" value="ECO:0007669"/>
    <property type="project" value="UniProtKB-SubCell"/>
</dbReference>
<dbReference type="GO" id="GO:0016990">
    <property type="term" value="F:arginine deiminase activity"/>
    <property type="evidence" value="ECO:0007669"/>
    <property type="project" value="UniProtKB-UniRule"/>
</dbReference>
<dbReference type="GO" id="GO:0019547">
    <property type="term" value="P:arginine catabolic process to ornithine"/>
    <property type="evidence" value="ECO:0007669"/>
    <property type="project" value="UniProtKB-UniRule"/>
</dbReference>
<dbReference type="GO" id="GO:0019546">
    <property type="term" value="P:arginine deiminase pathway"/>
    <property type="evidence" value="ECO:0007669"/>
    <property type="project" value="TreeGrafter"/>
</dbReference>
<dbReference type="Gene3D" id="1.10.3930.10">
    <property type="entry name" value="Arginine deiminase"/>
    <property type="match status" value="1"/>
</dbReference>
<dbReference type="Gene3D" id="3.75.10.10">
    <property type="entry name" value="L-arginine/glycine Amidinotransferase, Chain A"/>
    <property type="match status" value="1"/>
</dbReference>
<dbReference type="HAMAP" id="MF_00242">
    <property type="entry name" value="Arg_deiminase"/>
    <property type="match status" value="1"/>
</dbReference>
<dbReference type="InterPro" id="IPR003876">
    <property type="entry name" value="Arg_deiminase"/>
</dbReference>
<dbReference type="NCBIfam" id="TIGR01078">
    <property type="entry name" value="arcA"/>
    <property type="match status" value="1"/>
</dbReference>
<dbReference type="NCBIfam" id="NF002381">
    <property type="entry name" value="PRK01388.1"/>
    <property type="match status" value="1"/>
</dbReference>
<dbReference type="PANTHER" id="PTHR47271">
    <property type="entry name" value="ARGININE DEIMINASE"/>
    <property type="match status" value="1"/>
</dbReference>
<dbReference type="PANTHER" id="PTHR47271:SF2">
    <property type="entry name" value="ARGININE DEIMINASE"/>
    <property type="match status" value="1"/>
</dbReference>
<dbReference type="Pfam" id="PF02274">
    <property type="entry name" value="ADI"/>
    <property type="match status" value="1"/>
</dbReference>
<dbReference type="PIRSF" id="PIRSF006356">
    <property type="entry name" value="Arg_deiminase"/>
    <property type="match status" value="1"/>
</dbReference>
<dbReference type="PRINTS" id="PR01466">
    <property type="entry name" value="ARGDEIMINASE"/>
</dbReference>
<dbReference type="SUPFAM" id="SSF55909">
    <property type="entry name" value="Pentein"/>
    <property type="match status" value="1"/>
</dbReference>
<proteinExistence type="inferred from homology"/>
<accession>C1A399</accession>
<comment type="catalytic activity">
    <reaction evidence="1">
        <text>L-arginine + H2O = L-citrulline + NH4(+)</text>
        <dbReference type="Rhea" id="RHEA:19597"/>
        <dbReference type="ChEBI" id="CHEBI:15377"/>
        <dbReference type="ChEBI" id="CHEBI:28938"/>
        <dbReference type="ChEBI" id="CHEBI:32682"/>
        <dbReference type="ChEBI" id="CHEBI:57743"/>
        <dbReference type="EC" id="3.5.3.6"/>
    </reaction>
</comment>
<comment type="pathway">
    <text evidence="1">Amino-acid degradation; L-arginine degradation via ADI pathway; carbamoyl phosphate from L-arginine: step 1/2.</text>
</comment>
<comment type="subcellular location">
    <subcellularLocation>
        <location evidence="1">Cytoplasm</location>
    </subcellularLocation>
</comment>
<comment type="similarity">
    <text evidence="1">Belongs to the arginine deiminase family.</text>
</comment>
<name>ARCA_RHOE4</name>